<sequence length="1231" mass="131868">MNKTLGLILTSVFLLSTLGIITGFVIPTQAANSNDAAIYTIPSVTSVSNTSNIVINLFFNATSNSTVGAQASAFNYGLAINYTLDAITFTVVLPSGTSYPLIKLNAKNFANYGYYDLAHNSIVLLLNTTASSTAKELAYSYEQSIGVTPSASYKIYNYTNKTVNVNQYMNELPLSMLIYMATNGKYNNLASLPVGTKLEFTYAGVTYIIAVSPTVKLVGELLNPLYTANSKMLPGTNYAVGRSNITVAVYDNLITTTTSPFNFTLTYSSLAPALIYWFVIANTTYTNNGASTPTASFQAPPFKQYFPSNSTILYSAAPTKSSILMFNGQMNVTAHENVTLTLQTGTNIYTSPNFNVTPPGNYTFSGKLGVGFNGFIYQNGSATLTATIFNGTINFFFSSTGQKAAFTFFLVPIVPINLGDNNGATVIYNGVSLNTGFPQVVVMFNITGNFTKSGSNYLLYGSVYEAELKPLGSTQLQKLAGATDSTQFVGNLISSASSPLVSYFNYGESTTTITGTSLSFTVLMPLKFIVERLGYIYLVTFHIWGPSATVTVTGVDYHGTQIALGSFRAYVALPSFYTLPKTPLVGLTCDNMYTLAQVSDAGSVLETSTANSNANNATVIGPYDLMSNAGLHVAIYNGSKLVKSGNLGLLPNATTAPITTTITLNGQTVALTYSSAPTAIYPVDFKFEPGFSYSVTTNVIYNTSIPTYVVTVYMPLKYILQTKIVMWYVSPDYAAYFYYSSTGQYQTSNVTLTFANVTPELVMPQVFPVGKLYMPFGINDPYYVFYSSISIGPQSGVIEAVENGFNVGNITSITVELNGMNESIVLSPLNVSKLLISSNLGEVSQCSPLFTTTLFNISALASLLGLPNAAALNGSYLYVTYHDIISGAYVTNRTLLVVGQFYVMPPTTPGSVEWILTAKYINATTGIPVEISYAVVQQPSAKVVDINAANASITQIQVTGVKIVSKYATVTVMYNPSNASTIVYMNGMFVASYGGNLISSLSETSTFGVYYGAVVNLYVATGTLSSPNGTMYVVLGSHKVAVGTANLYTYAGYHFGPYTALPLVSNVTFTVQDPVTHATLTGQTTLGAFNNTPIRLAPLGVSIPQTAQYKVFYYYSTPLVLSPTSQYIVLSVTSVISYPYPFYIETVSFLGYNVTTGTPVPGTPAFQTVYSPSLGPGVVLQVPVQSYQFISLSTPSEPHTVVMFAVPFAGGPAISLYPTFLVYANVTAISS</sequence>
<name>SLAA_SACS2</name>
<reference key="1">
    <citation type="journal article" date="2005" name="Can. J. Microbiol.">
        <title>Molecular organization of selected prokaryotic S-layer proteins.</title>
        <authorList>
            <person name="Claus H."/>
            <person name="Akca E."/>
            <person name="Debaerdemaeker T."/>
            <person name="Evrard C."/>
            <person name="Declercq J.P."/>
            <person name="Harris J.R."/>
            <person name="Schlott B."/>
            <person name="Konig H."/>
        </authorList>
    </citation>
    <scope>NUCLEOTIDE SEQUENCE [GENOMIC DNA]</scope>
    <source>
        <strain>ATCC 35092 / DSM 1617 / JCM 11322 / P2</strain>
    </source>
</reference>
<reference key="2">
    <citation type="journal article" date="2001" name="Proc. Natl. Acad. Sci. U.S.A.">
        <title>The complete genome of the crenarchaeon Sulfolobus solfataricus P2.</title>
        <authorList>
            <person name="She Q."/>
            <person name="Singh R.K."/>
            <person name="Confalonieri F."/>
            <person name="Zivanovic Y."/>
            <person name="Allard G."/>
            <person name="Awayez M.J."/>
            <person name="Chan-Weiher C.C.-Y."/>
            <person name="Clausen I.G."/>
            <person name="Curtis B.A."/>
            <person name="De Moors A."/>
            <person name="Erauso G."/>
            <person name="Fletcher C."/>
            <person name="Gordon P.M.K."/>
            <person name="Heikamp-de Jong I."/>
            <person name="Jeffries A.C."/>
            <person name="Kozera C.J."/>
            <person name="Medina N."/>
            <person name="Peng X."/>
            <person name="Thi-Ngoc H.P."/>
            <person name="Redder P."/>
            <person name="Schenk M.E."/>
            <person name="Theriault C."/>
            <person name="Tolstrup N."/>
            <person name="Charlebois R.L."/>
            <person name="Doolittle W.F."/>
            <person name="Duguet M."/>
            <person name="Gaasterland T."/>
            <person name="Garrett R.A."/>
            <person name="Ragan M.A."/>
            <person name="Sensen C.W."/>
            <person name="Van der Oost J."/>
        </authorList>
    </citation>
    <scope>NUCLEOTIDE SEQUENCE [LARGE SCALE GENOMIC DNA]</scope>
    <source>
        <strain>ATCC 35092 / DSM 1617 / JCM 11322 / P2</strain>
    </source>
</reference>
<reference key="3">
    <citation type="journal article" date="2009" name="Mol. Microbiol.">
        <title>Acidianus, Sulfolobus and Metallosphaera surface layers: structure, composition and gene expression.</title>
        <authorList>
            <person name="Veith A."/>
            <person name="Klingl A."/>
            <person name="Zolghadr B."/>
            <person name="Lauber K."/>
            <person name="Mentele R."/>
            <person name="Lottspeich F."/>
            <person name="Rachel R."/>
            <person name="Albers S.V."/>
            <person name="Kletzin A."/>
        </authorList>
    </citation>
    <scope>PROTEIN SEQUENCE OF 36-41</scope>
    <scope>FUNCTION</scope>
    <scope>SUBUNIT</scope>
    <scope>SUBCELLULAR LOCATION</scope>
    <scope>INDUCTION</scope>
    <source>
        <strain>ATCC 35092 / DSM 1617 / JCM 11322 / P2</strain>
    </source>
</reference>
<proteinExistence type="evidence at protein level"/>
<accession>Q980C7</accession>
<accession>Q2M1E7</accession>
<gene>
    <name evidence="2" type="primary">slaA</name>
    <name evidence="6" type="synonym">slp1</name>
    <name evidence="5" type="ordered locus">SSO0389</name>
</gene>
<keyword id="KW-0134">Cell wall</keyword>
<keyword id="KW-0903">Direct protein sequencing</keyword>
<keyword id="KW-1185">Reference proteome</keyword>
<keyword id="KW-0701">S-layer</keyword>
<keyword id="KW-0964">Secreted</keyword>
<keyword id="KW-0732">Signal</keyword>
<organism>
    <name type="scientific">Saccharolobus solfataricus (strain ATCC 35092 / DSM 1617 / JCM 11322 / P2)</name>
    <name type="common">Sulfolobus solfataricus</name>
    <dbReference type="NCBI Taxonomy" id="273057"/>
    <lineage>
        <taxon>Archaea</taxon>
        <taxon>Thermoproteota</taxon>
        <taxon>Thermoprotei</taxon>
        <taxon>Sulfolobales</taxon>
        <taxon>Sulfolobaceae</taxon>
        <taxon>Saccharolobus</taxon>
    </lineage>
</organism>
<evidence type="ECO:0000269" key="1">
    <source>
    </source>
</evidence>
<evidence type="ECO:0000303" key="2">
    <source>
    </source>
</evidence>
<evidence type="ECO:0000305" key="3"/>
<evidence type="ECO:0000305" key="4">
    <source>
    </source>
</evidence>
<evidence type="ECO:0000312" key="5">
    <source>
        <dbReference type="EMBL" id="AAK40716.1"/>
    </source>
</evidence>
<evidence type="ECO:0000312" key="6">
    <source>
        <dbReference type="EMBL" id="CAJ31324.1"/>
    </source>
</evidence>
<feature type="signal peptide" evidence="1">
    <location>
        <begin position="1"/>
        <end position="35"/>
    </location>
</feature>
<feature type="chain" id="PRO_0000444052" description="S-layer protein A">
    <location>
        <begin position="36"/>
        <end position="1231"/>
    </location>
</feature>
<comment type="function">
    <text evidence="1">S-layer large protein. May form the highly ordered outer sheath.</text>
</comment>
<comment type="subunit">
    <text evidence="4">The mushroom-shaped unit cells of the Sulfolobales' S-layers may consist of three SlaB subunits and six SlaA subunits.</text>
</comment>
<comment type="subcellular location">
    <subcellularLocation>
        <location evidence="1">Secreted</location>
        <location evidence="1">Cell wall</location>
        <location evidence="1">S-layer</location>
    </subcellularLocation>
</comment>
<comment type="induction">
    <text evidence="1">Constitutively expressed.</text>
</comment>
<comment type="similarity">
    <text evidence="3">Belongs to the Sulfolobales SlaA family.</text>
</comment>
<dbReference type="EMBL" id="BN000829">
    <property type="protein sequence ID" value="CAJ31324.1"/>
    <property type="molecule type" value="Genomic_DNA"/>
</dbReference>
<dbReference type="EMBL" id="AE006641">
    <property type="protein sequence ID" value="AAK40716.1"/>
    <property type="molecule type" value="Genomic_DNA"/>
</dbReference>
<dbReference type="PIR" id="E90182">
    <property type="entry name" value="E90182"/>
</dbReference>
<dbReference type="RefSeq" id="WP_010922960.1">
    <property type="nucleotide sequence ID" value="NC_002754.1"/>
</dbReference>
<dbReference type="FunCoup" id="Q980C7">
    <property type="interactions" value="2"/>
</dbReference>
<dbReference type="IntAct" id="Q980C7">
    <property type="interactions" value="1"/>
</dbReference>
<dbReference type="MINT" id="Q980C7"/>
<dbReference type="STRING" id="273057.SSO0389"/>
<dbReference type="PaxDb" id="273057-SSO0389"/>
<dbReference type="EnsemblBacteria" id="AAK40716">
    <property type="protein sequence ID" value="AAK40716"/>
    <property type="gene ID" value="SSO0389"/>
</dbReference>
<dbReference type="GeneID" id="1455526"/>
<dbReference type="GeneID" id="27426684"/>
<dbReference type="KEGG" id="sso:SSO0389"/>
<dbReference type="PATRIC" id="fig|273057.12.peg.383"/>
<dbReference type="eggNOG" id="arCOG06039">
    <property type="taxonomic scope" value="Archaea"/>
</dbReference>
<dbReference type="HOGENOM" id="CLU_264979_0_0_2"/>
<dbReference type="InParanoid" id="Q980C7"/>
<dbReference type="Proteomes" id="UP000001974">
    <property type="component" value="Chromosome"/>
</dbReference>
<dbReference type="GO" id="GO:0005576">
    <property type="term" value="C:extracellular region"/>
    <property type="evidence" value="ECO:0007669"/>
    <property type="project" value="UniProtKB-KW"/>
</dbReference>
<dbReference type="GO" id="GO:0030115">
    <property type="term" value="C:S-layer"/>
    <property type="evidence" value="ECO:0007669"/>
    <property type="project" value="UniProtKB-SubCell"/>
</dbReference>
<protein>
    <recommendedName>
        <fullName evidence="2">S-layer protein A</fullName>
    </recommendedName>
    <alternativeName>
        <fullName evidence="3">Surface layer large protein</fullName>
    </alternativeName>
</protein>